<dbReference type="EMBL" id="U28743">
    <property type="protein sequence ID" value="AAB03901.1"/>
    <property type="status" value="ALT_INIT"/>
    <property type="molecule type" value="Genomic_DNA"/>
</dbReference>
<dbReference type="EMBL" id="AP010918">
    <property type="protein sequence ID" value="BAH27168.1"/>
    <property type="molecule type" value="Genomic_DNA"/>
</dbReference>
<dbReference type="SMR" id="C1AFY9"/>
<dbReference type="GlyCosmos" id="C1AFY9">
    <property type="glycosylation" value="2 sites, No reported glycans"/>
</dbReference>
<dbReference type="KEGG" id="mbt:JTY_2890"/>
<dbReference type="HOGENOM" id="CLU_031281_3_0_11"/>
<dbReference type="GO" id="GO:0031012">
    <property type="term" value="C:extracellular matrix"/>
    <property type="evidence" value="ECO:0007669"/>
    <property type="project" value="TreeGrafter"/>
</dbReference>
<dbReference type="GO" id="GO:0005615">
    <property type="term" value="C:extracellular space"/>
    <property type="evidence" value="ECO:0007669"/>
    <property type="project" value="TreeGrafter"/>
</dbReference>
<dbReference type="GO" id="GO:0005886">
    <property type="term" value="C:plasma membrane"/>
    <property type="evidence" value="ECO:0007669"/>
    <property type="project" value="UniProtKB-SubCell"/>
</dbReference>
<dbReference type="GO" id="GO:0050839">
    <property type="term" value="F:cell adhesion molecule binding"/>
    <property type="evidence" value="ECO:0007669"/>
    <property type="project" value="TreeGrafter"/>
</dbReference>
<dbReference type="GO" id="GO:0007155">
    <property type="term" value="P:cell adhesion"/>
    <property type="evidence" value="ECO:0007669"/>
    <property type="project" value="TreeGrafter"/>
</dbReference>
<dbReference type="GO" id="GO:0030198">
    <property type="term" value="P:extracellular matrix organization"/>
    <property type="evidence" value="ECO:0007669"/>
    <property type="project" value="TreeGrafter"/>
</dbReference>
<dbReference type="FunFam" id="2.30.180.10:FF:000019">
    <property type="entry name" value="Cell surface lipoprotein"/>
    <property type="match status" value="1"/>
</dbReference>
<dbReference type="Gene3D" id="2.30.180.10">
    <property type="entry name" value="FAS1 domain"/>
    <property type="match status" value="1"/>
</dbReference>
<dbReference type="InterPro" id="IPR050904">
    <property type="entry name" value="Adhesion/Biosynth-related"/>
</dbReference>
<dbReference type="InterPro" id="IPR036378">
    <property type="entry name" value="FAS1_dom_sf"/>
</dbReference>
<dbReference type="InterPro" id="IPR000782">
    <property type="entry name" value="FAS1_domain"/>
</dbReference>
<dbReference type="PANTHER" id="PTHR10900:SF77">
    <property type="entry name" value="FI19380P1"/>
    <property type="match status" value="1"/>
</dbReference>
<dbReference type="PANTHER" id="PTHR10900">
    <property type="entry name" value="PERIOSTIN-RELATED"/>
    <property type="match status" value="1"/>
</dbReference>
<dbReference type="Pfam" id="PF02469">
    <property type="entry name" value="Fasciclin"/>
    <property type="match status" value="1"/>
</dbReference>
<dbReference type="SMART" id="SM00554">
    <property type="entry name" value="FAS1"/>
    <property type="match status" value="1"/>
</dbReference>
<dbReference type="SUPFAM" id="SSF82153">
    <property type="entry name" value="FAS1 domain"/>
    <property type="match status" value="1"/>
</dbReference>
<dbReference type="PROSITE" id="PS50213">
    <property type="entry name" value="FAS1"/>
    <property type="match status" value="1"/>
</dbReference>
<dbReference type="PROSITE" id="PS51257">
    <property type="entry name" value="PROKAR_LIPOPROTEIN"/>
    <property type="match status" value="1"/>
</dbReference>
<comment type="subcellular location">
    <subcellularLocation>
        <location evidence="4 7">Cell membrane</location>
        <topology evidence="4 7">Lipid-anchor</topology>
    </subcellularLocation>
    <subcellularLocation>
        <location evidence="2">Secreted</location>
        <location evidence="2">Cell wall</location>
    </subcellularLocation>
    <subcellularLocation>
        <location evidence="1">Secreted</location>
    </subcellularLocation>
</comment>
<comment type="PTM">
    <text evidence="1">O-glycosylated. Contains 0-3 mannose residues attached to residues 48-49 in various configurations; the dominant glycoform is Thr-48(Man)/Thr-49(Man2) with an unusual Man(1-&gt;3)Man linkage, but Thr48(Man3)/Thr49(Man0) through to Thr48(Man0/)Thr49(Man3) are also seen (By similarity).</text>
</comment>
<comment type="miscellaneous">
    <text>Highly immunogenic.</text>
</comment>
<comment type="sequence caution" evidence="6">
    <conflict type="erroneous initiation">
        <sequence resource="EMBL-CDS" id="AAB03901"/>
    </conflict>
    <text>Extended N-terminus.</text>
</comment>
<evidence type="ECO:0000250" key="1">
    <source>
        <dbReference type="UniProtKB" id="P0CAX7"/>
    </source>
</evidence>
<evidence type="ECO:0000250" key="2">
    <source>
        <dbReference type="UniProtKB" id="P9WNF3"/>
    </source>
</evidence>
<evidence type="ECO:0000255" key="3">
    <source>
        <dbReference type="PROSITE-ProRule" id="PRU00082"/>
    </source>
</evidence>
<evidence type="ECO:0000255" key="4">
    <source>
        <dbReference type="PROSITE-ProRule" id="PRU00303"/>
    </source>
</evidence>
<evidence type="ECO:0000269" key="5">
    <source>
    </source>
</evidence>
<evidence type="ECO:0000305" key="6"/>
<evidence type="ECO:0000305" key="7">
    <source>
    </source>
</evidence>
<accession>C1AFY9</accession>
<accession>P0A671</accession>
<accession>P71493</accession>
<accession>Q10790</accession>
<protein>
    <recommendedName>
        <fullName>Cell surface glycolipoprotein MPB83</fullName>
    </recommendedName>
    <alternativeName>
        <fullName>Lipoprotein p23</fullName>
    </alternativeName>
</protein>
<keyword id="KW-1003">Cell membrane</keyword>
<keyword id="KW-0134">Cell wall</keyword>
<keyword id="KW-0325">Glycoprotein</keyword>
<keyword id="KW-0449">Lipoprotein</keyword>
<keyword id="KW-0472">Membrane</keyword>
<keyword id="KW-0564">Palmitate</keyword>
<keyword id="KW-0964">Secreted</keyword>
<keyword id="KW-0732">Signal</keyword>
<name>MP83_MYCBT</name>
<organism>
    <name type="scientific">Mycobacterium bovis (strain BCG / Tokyo 172 / ATCC 35737 / TMC 1019)</name>
    <dbReference type="NCBI Taxonomy" id="561275"/>
    <lineage>
        <taxon>Bacteria</taxon>
        <taxon>Bacillati</taxon>
        <taxon>Actinomycetota</taxon>
        <taxon>Actinomycetes</taxon>
        <taxon>Mycobacteriales</taxon>
        <taxon>Mycobacteriaceae</taxon>
        <taxon>Mycobacterium</taxon>
        <taxon>Mycobacterium tuberculosis complex</taxon>
    </lineage>
</organism>
<reference key="1">
    <citation type="journal article" date="1997" name="Gene">
        <title>Characterisation of a lipoprotein in Mycobacterium bovis (BCG) with sequence similarity to the secreted protein MPB70.</title>
        <authorList>
            <person name="Vosloo W."/>
            <person name="Tippoo P."/>
            <person name="Hughes E.J."/>
            <person name="Harriman N."/>
            <person name="Emms M."/>
            <person name="Beatty D.W."/>
            <person name="Zappe H."/>
            <person name="Steyn L.M."/>
        </authorList>
    </citation>
    <scope>NUCLEOTIDE SEQUENCE [GENOMIC DNA]</scope>
    <scope>CHARACTERIZATION</scope>
    <scope>MUTAGENESIS OF CYS-25</scope>
    <scope>DIACYLGLYCEROL AT CYS-25</scope>
    <scope>PALMITOYLATION AT CYS-25</scope>
    <source>
        <strain>BCG / Tokyo 172 / ATCC 35737 / TMC 1019</strain>
    </source>
</reference>
<reference key="2">
    <citation type="journal article" date="2009" name="Vaccine">
        <title>Whole genome sequence analysis of Mycobacterium bovis bacillus Calmette-Guerin (BCG) Tokyo 172: a comparative study of BCG vaccine substrains.</title>
        <authorList>
            <person name="Seki M."/>
            <person name="Honda I."/>
            <person name="Fujita I."/>
            <person name="Yano I."/>
            <person name="Yamamoto S."/>
            <person name="Koyama A."/>
        </authorList>
    </citation>
    <scope>NUCLEOTIDE SEQUENCE [LARGE SCALE GENOMIC DNA]</scope>
    <source>
        <strain>BCG / Tokyo 172 / ATCC 35737 / TMC 1019</strain>
    </source>
</reference>
<feature type="signal peptide" evidence="7">
    <location>
        <begin position="1"/>
        <end position="24"/>
    </location>
</feature>
<feature type="chain" id="PRO_0000379526" description="Cell surface glycolipoprotein MPB83">
    <location>
        <begin position="25"/>
        <end position="220"/>
    </location>
</feature>
<feature type="domain" description="FAS1" evidence="3">
    <location>
        <begin position="83"/>
        <end position="215"/>
    </location>
</feature>
<feature type="lipid moiety-binding region" description="N-palmitoyl cysteine" evidence="7">
    <location>
        <position position="25"/>
    </location>
</feature>
<feature type="lipid moiety-binding region" description="S-diacylglycerol cysteine" evidence="7">
    <location>
        <position position="25"/>
    </location>
</feature>
<feature type="glycosylation site" description="O-linked (Man...) threonine" evidence="1">
    <location>
        <position position="48"/>
    </location>
</feature>
<feature type="glycosylation site" description="O-linked (Man...) threonine" evidence="1">
    <location>
        <position position="49"/>
    </location>
</feature>
<feature type="mutagenesis site" description="Loss of membrane localization." evidence="5">
    <original>C</original>
    <variation>S</variation>
    <location>
        <position position="25"/>
    </location>
</feature>
<proteinExistence type="evidence at protein level"/>
<sequence>MINVQAKPAAAASLAAIAIAFLAGCSSTKPVSQDTSPKPATSPAAPVTTAAMADPAADLIGRGCAQYAAQNPTGPGSVAGMAQDPVATAASNNPMLSTLTSALSGKLNPDVNLVDTLNGGEYTVFAPTNAAFDKLPAATIDQLKTDAKLLSSILTYHVIAGQASPSRIDGTHQTLQGADLTVIGARDDLMVNNAGLVCGGVHTANATVYMIDTVLMPPAQ</sequence>
<gene>
    <name type="primary">mpb83</name>
    <name type="ordered locus">JTY_2890</name>
</gene>